<organism>
    <name type="scientific">Methylobacterium nodulans (strain LMG 21967 / CNCM I-2342 / ORS 2060)</name>
    <dbReference type="NCBI Taxonomy" id="460265"/>
    <lineage>
        <taxon>Bacteria</taxon>
        <taxon>Pseudomonadati</taxon>
        <taxon>Pseudomonadota</taxon>
        <taxon>Alphaproteobacteria</taxon>
        <taxon>Hyphomicrobiales</taxon>
        <taxon>Methylobacteriaceae</taxon>
        <taxon>Methylobacterium</taxon>
    </lineage>
</organism>
<proteinExistence type="inferred from homology"/>
<comment type="catalytic activity">
    <reaction evidence="1">
        <text>L-glutamine + H2O = L-glutamate + NH4(+)</text>
        <dbReference type="Rhea" id="RHEA:15889"/>
        <dbReference type="ChEBI" id="CHEBI:15377"/>
        <dbReference type="ChEBI" id="CHEBI:28938"/>
        <dbReference type="ChEBI" id="CHEBI:29985"/>
        <dbReference type="ChEBI" id="CHEBI:58359"/>
        <dbReference type="EC" id="3.5.1.2"/>
    </reaction>
</comment>
<comment type="subunit">
    <text evidence="1">Homotetramer.</text>
</comment>
<comment type="similarity">
    <text evidence="1">Belongs to the glutaminase family.</text>
</comment>
<gene>
    <name evidence="1" type="primary">glsA</name>
    <name type="ordered locus">Mnod_4504</name>
</gene>
<keyword id="KW-0378">Hydrolase</keyword>
<keyword id="KW-1185">Reference proteome</keyword>
<accession>B8ICY0</accession>
<name>GLSA_METNO</name>
<protein>
    <recommendedName>
        <fullName evidence="1">Glutaminase</fullName>
        <ecNumber evidence="1">3.5.1.2</ecNumber>
    </recommendedName>
</protein>
<evidence type="ECO:0000255" key="1">
    <source>
        <dbReference type="HAMAP-Rule" id="MF_00313"/>
    </source>
</evidence>
<reference key="1">
    <citation type="submission" date="2009-01" db="EMBL/GenBank/DDBJ databases">
        <title>Complete sequence of chromosome of Methylobacterium nodulans ORS 2060.</title>
        <authorList>
            <consortium name="US DOE Joint Genome Institute"/>
            <person name="Lucas S."/>
            <person name="Copeland A."/>
            <person name="Lapidus A."/>
            <person name="Glavina del Rio T."/>
            <person name="Dalin E."/>
            <person name="Tice H."/>
            <person name="Bruce D."/>
            <person name="Goodwin L."/>
            <person name="Pitluck S."/>
            <person name="Sims D."/>
            <person name="Brettin T."/>
            <person name="Detter J.C."/>
            <person name="Han C."/>
            <person name="Larimer F."/>
            <person name="Land M."/>
            <person name="Hauser L."/>
            <person name="Kyrpides N."/>
            <person name="Ivanova N."/>
            <person name="Marx C.J."/>
            <person name="Richardson P."/>
        </authorList>
    </citation>
    <scope>NUCLEOTIDE SEQUENCE [LARGE SCALE GENOMIC DNA]</scope>
    <source>
        <strain>LMG 21967 / CNCM I-2342 / ORS 2060</strain>
    </source>
</reference>
<dbReference type="EC" id="3.5.1.2" evidence="1"/>
<dbReference type="EMBL" id="CP001349">
    <property type="protein sequence ID" value="ACL59372.1"/>
    <property type="molecule type" value="Genomic_DNA"/>
</dbReference>
<dbReference type="RefSeq" id="WP_015931010.1">
    <property type="nucleotide sequence ID" value="NC_011894.1"/>
</dbReference>
<dbReference type="SMR" id="B8ICY0"/>
<dbReference type="STRING" id="460265.Mnod_4504"/>
<dbReference type="KEGG" id="mno:Mnod_4504"/>
<dbReference type="eggNOG" id="COG2066">
    <property type="taxonomic scope" value="Bacteria"/>
</dbReference>
<dbReference type="HOGENOM" id="CLU_027932_1_1_5"/>
<dbReference type="OrthoDB" id="9788822at2"/>
<dbReference type="Proteomes" id="UP000008207">
    <property type="component" value="Chromosome"/>
</dbReference>
<dbReference type="GO" id="GO:0004359">
    <property type="term" value="F:glutaminase activity"/>
    <property type="evidence" value="ECO:0007669"/>
    <property type="project" value="UniProtKB-UniRule"/>
</dbReference>
<dbReference type="GO" id="GO:0006537">
    <property type="term" value="P:glutamate biosynthetic process"/>
    <property type="evidence" value="ECO:0007669"/>
    <property type="project" value="TreeGrafter"/>
</dbReference>
<dbReference type="GO" id="GO:0006543">
    <property type="term" value="P:glutamine catabolic process"/>
    <property type="evidence" value="ECO:0007669"/>
    <property type="project" value="TreeGrafter"/>
</dbReference>
<dbReference type="FunFam" id="3.40.710.10:FF:000005">
    <property type="entry name" value="Glutaminase"/>
    <property type="match status" value="1"/>
</dbReference>
<dbReference type="Gene3D" id="3.40.710.10">
    <property type="entry name" value="DD-peptidase/beta-lactamase superfamily"/>
    <property type="match status" value="1"/>
</dbReference>
<dbReference type="HAMAP" id="MF_00313">
    <property type="entry name" value="Glutaminase"/>
    <property type="match status" value="1"/>
</dbReference>
<dbReference type="InterPro" id="IPR012338">
    <property type="entry name" value="Beta-lactam/transpept-like"/>
</dbReference>
<dbReference type="InterPro" id="IPR015868">
    <property type="entry name" value="Glutaminase"/>
</dbReference>
<dbReference type="NCBIfam" id="TIGR03814">
    <property type="entry name" value="Gln_ase"/>
    <property type="match status" value="1"/>
</dbReference>
<dbReference type="NCBIfam" id="NF002133">
    <property type="entry name" value="PRK00971.1-2"/>
    <property type="match status" value="1"/>
</dbReference>
<dbReference type="PANTHER" id="PTHR12544">
    <property type="entry name" value="GLUTAMINASE"/>
    <property type="match status" value="1"/>
</dbReference>
<dbReference type="PANTHER" id="PTHR12544:SF29">
    <property type="entry name" value="GLUTAMINASE"/>
    <property type="match status" value="1"/>
</dbReference>
<dbReference type="Pfam" id="PF04960">
    <property type="entry name" value="Glutaminase"/>
    <property type="match status" value="1"/>
</dbReference>
<dbReference type="SUPFAM" id="SSF56601">
    <property type="entry name" value="beta-lactamase/transpeptidase-like"/>
    <property type="match status" value="1"/>
</dbReference>
<sequence length="309" mass="33272">MPDLTSVVQEIAEEMRERPDRGEVATYIPELARADPKAFGLVVIDADGQVAAAGDSDVPFSIQSISKVFTLTLALGMVGDRLWRRVGREPSGSPFNSIVQLEYERGIPRNPFINAGAIAVTDLILSRHQPREALGEILRFMQFLAQDSSIAIDEAVAASELRTGFRNAALANFMKAHGVIDNPVEYTLGVYFHHCAIAMTCRQLAEAGRFLAHSGRNPSTGHLVVQPERARRINAVMLTCGHYDGSGEFAFRVGLPGKSGVGGGILAVAPGRASIAVWSPGLDASGNSHLGRIALERLTKRLGWSIFGQ</sequence>
<feature type="chain" id="PRO_1000132908" description="Glutaminase">
    <location>
        <begin position="1"/>
        <end position="309"/>
    </location>
</feature>
<feature type="binding site" evidence="1">
    <location>
        <position position="64"/>
    </location>
    <ligand>
        <name>substrate</name>
    </ligand>
</feature>
<feature type="binding site" evidence="1">
    <location>
        <position position="114"/>
    </location>
    <ligand>
        <name>substrate</name>
    </ligand>
</feature>
<feature type="binding site" evidence="1">
    <location>
        <position position="160"/>
    </location>
    <ligand>
        <name>substrate</name>
    </ligand>
</feature>
<feature type="binding site" evidence="1">
    <location>
        <position position="167"/>
    </location>
    <ligand>
        <name>substrate</name>
    </ligand>
</feature>
<feature type="binding site" evidence="1">
    <location>
        <position position="191"/>
    </location>
    <ligand>
        <name>substrate</name>
    </ligand>
</feature>
<feature type="binding site" evidence="1">
    <location>
        <position position="243"/>
    </location>
    <ligand>
        <name>substrate</name>
    </ligand>
</feature>
<feature type="binding site" evidence="1">
    <location>
        <position position="261"/>
    </location>
    <ligand>
        <name>substrate</name>
    </ligand>
</feature>